<accession>A9ES55</accession>
<sequence length="278" mass="30466">MVPGYTEETVLEVHHWTDKLFTLKTTRSPSFRFANGQFCMMGLVVAGKPLVRAYSLASANHEETLEFFSIKVPNGPLTSRLQHIAVGETILVGKRATGTLTIGNLRPGRTLWLLATGTGLAPFLSVVKDPETYERFERVVITHTCRRVQDLAYARYLEHELAADELLGEIVRPKLRYYPSVTREAFKTEGRITALLESGRIFADLALPALDPAHDRLMLCGSSEMLADTAALLEARGFEEGNSGEPGDYLVEKAFAGEKRSPLASASPAESTNLSGPA</sequence>
<feature type="chain" id="PRO_0000459768" description="Ferredoxin--NADP reductase A">
    <location>
        <begin position="1"/>
        <end position="278"/>
    </location>
</feature>
<feature type="domain" description="FAD-binding FR-type" evidence="2">
    <location>
        <begin position="3"/>
        <end position="103"/>
    </location>
</feature>
<feature type="binding site" evidence="1">
    <location>
        <begin position="52"/>
        <end position="55"/>
    </location>
    <ligand>
        <name>FAD</name>
        <dbReference type="ChEBI" id="CHEBI:57692"/>
    </ligand>
</feature>
<feature type="binding site" evidence="1">
    <location>
        <position position="118"/>
    </location>
    <ligand>
        <name>FAD</name>
        <dbReference type="ChEBI" id="CHEBI:57692"/>
    </ligand>
</feature>
<dbReference type="EC" id="1.18.1.2" evidence="6"/>
<dbReference type="EMBL" id="AM746676">
    <property type="protein sequence ID" value="CAN97356.1"/>
    <property type="molecule type" value="Genomic_DNA"/>
</dbReference>
<dbReference type="RefSeq" id="WP_012239795.1">
    <property type="nucleotide sequence ID" value="NC_010162.1"/>
</dbReference>
<dbReference type="SMR" id="A9ES55"/>
<dbReference type="STRING" id="448385.sce7188"/>
<dbReference type="KEGG" id="scl:sce7188"/>
<dbReference type="eggNOG" id="COG0543">
    <property type="taxonomic scope" value="Bacteria"/>
</dbReference>
<dbReference type="HOGENOM" id="CLU_003827_3_0_7"/>
<dbReference type="OrthoDB" id="9784483at2"/>
<dbReference type="BioCyc" id="SCEL448385:SCE_RS36840-MONOMER"/>
<dbReference type="Proteomes" id="UP000002139">
    <property type="component" value="Chromosome"/>
</dbReference>
<dbReference type="GO" id="GO:0004324">
    <property type="term" value="F:ferredoxin-NADP+ reductase activity"/>
    <property type="evidence" value="ECO:0007669"/>
    <property type="project" value="UniProtKB-EC"/>
</dbReference>
<dbReference type="GO" id="GO:0000166">
    <property type="term" value="F:nucleotide binding"/>
    <property type="evidence" value="ECO:0007669"/>
    <property type="project" value="UniProtKB-KW"/>
</dbReference>
<dbReference type="GO" id="GO:0034599">
    <property type="term" value="P:cellular response to oxidative stress"/>
    <property type="evidence" value="ECO:0007669"/>
    <property type="project" value="TreeGrafter"/>
</dbReference>
<dbReference type="GO" id="GO:0042167">
    <property type="term" value="P:heme catabolic process"/>
    <property type="evidence" value="ECO:0007669"/>
    <property type="project" value="TreeGrafter"/>
</dbReference>
<dbReference type="CDD" id="cd06195">
    <property type="entry name" value="FNR1"/>
    <property type="match status" value="1"/>
</dbReference>
<dbReference type="Gene3D" id="3.40.50.80">
    <property type="entry name" value="Nucleotide-binding domain of ferredoxin-NADP reductase (FNR) module"/>
    <property type="match status" value="1"/>
</dbReference>
<dbReference type="Gene3D" id="2.40.30.10">
    <property type="entry name" value="Translation factors"/>
    <property type="match status" value="1"/>
</dbReference>
<dbReference type="InterPro" id="IPR008333">
    <property type="entry name" value="Cbr1-like_FAD-bd_dom"/>
</dbReference>
<dbReference type="InterPro" id="IPR017927">
    <property type="entry name" value="FAD-bd_FR_type"/>
</dbReference>
<dbReference type="InterPro" id="IPR033892">
    <property type="entry name" value="FNR_bac"/>
</dbReference>
<dbReference type="InterPro" id="IPR039261">
    <property type="entry name" value="FNR_nucleotide-bd"/>
</dbReference>
<dbReference type="InterPro" id="IPR051930">
    <property type="entry name" value="FNR_type-1"/>
</dbReference>
<dbReference type="InterPro" id="IPR001433">
    <property type="entry name" value="OxRdtase_FAD/NAD-bd"/>
</dbReference>
<dbReference type="InterPro" id="IPR017938">
    <property type="entry name" value="Riboflavin_synthase-like_b-brl"/>
</dbReference>
<dbReference type="PANTHER" id="PTHR47878:SF1">
    <property type="entry name" value="FLAVODOXIN_FERREDOXIN--NADP REDUCTASE"/>
    <property type="match status" value="1"/>
</dbReference>
<dbReference type="PANTHER" id="PTHR47878">
    <property type="entry name" value="OXIDOREDUCTASE FAD/NAD(P)-BINDING DOMAIN PROTEIN"/>
    <property type="match status" value="1"/>
</dbReference>
<dbReference type="Pfam" id="PF00970">
    <property type="entry name" value="FAD_binding_6"/>
    <property type="match status" value="1"/>
</dbReference>
<dbReference type="Pfam" id="PF00175">
    <property type="entry name" value="NAD_binding_1"/>
    <property type="match status" value="1"/>
</dbReference>
<dbReference type="SUPFAM" id="SSF52343">
    <property type="entry name" value="Ferredoxin reductase-like, C-terminal NADP-linked domain"/>
    <property type="match status" value="1"/>
</dbReference>
<dbReference type="SUPFAM" id="SSF63380">
    <property type="entry name" value="Riboflavin synthase domain-like"/>
    <property type="match status" value="1"/>
</dbReference>
<dbReference type="PROSITE" id="PS51384">
    <property type="entry name" value="FAD_FR"/>
    <property type="match status" value="1"/>
</dbReference>
<name>FDRA_SORC5</name>
<organism>
    <name type="scientific">Sorangium cellulosum (strain So ce56)</name>
    <name type="common">Polyangium cellulosum (strain So ce56)</name>
    <dbReference type="NCBI Taxonomy" id="448385"/>
    <lineage>
        <taxon>Bacteria</taxon>
        <taxon>Pseudomonadati</taxon>
        <taxon>Myxococcota</taxon>
        <taxon>Polyangia</taxon>
        <taxon>Polyangiales</taxon>
        <taxon>Polyangiaceae</taxon>
        <taxon>Sorangium</taxon>
    </lineage>
</organism>
<reference key="1">
    <citation type="journal article" date="2007" name="Nat. Biotechnol.">
        <title>Complete genome sequence of the myxobacterium Sorangium cellulosum.</title>
        <authorList>
            <person name="Schneiker S."/>
            <person name="Perlova O."/>
            <person name="Kaiser O."/>
            <person name="Gerth K."/>
            <person name="Alici A."/>
            <person name="Altmeyer M.O."/>
            <person name="Bartels D."/>
            <person name="Bekel T."/>
            <person name="Beyer S."/>
            <person name="Bode E."/>
            <person name="Bode H.B."/>
            <person name="Bolten C.J."/>
            <person name="Choudhuri J.V."/>
            <person name="Doss S."/>
            <person name="Elnakady Y.A."/>
            <person name="Frank B."/>
            <person name="Gaigalat L."/>
            <person name="Goesmann A."/>
            <person name="Groeger C."/>
            <person name="Gross F."/>
            <person name="Jelsbak L."/>
            <person name="Jelsbak L."/>
            <person name="Kalinowski J."/>
            <person name="Kegler C."/>
            <person name="Knauber T."/>
            <person name="Konietzny S."/>
            <person name="Kopp M."/>
            <person name="Krause L."/>
            <person name="Krug D."/>
            <person name="Linke B."/>
            <person name="Mahmud T."/>
            <person name="Martinez-Arias R."/>
            <person name="McHardy A.C."/>
            <person name="Merai M."/>
            <person name="Meyer F."/>
            <person name="Mormann S."/>
            <person name="Munoz-Dorado J."/>
            <person name="Perez J."/>
            <person name="Pradella S."/>
            <person name="Rachid S."/>
            <person name="Raddatz G."/>
            <person name="Rosenau F."/>
            <person name="Rueckert C."/>
            <person name="Sasse F."/>
            <person name="Scharfe M."/>
            <person name="Schuster S.C."/>
            <person name="Suen G."/>
            <person name="Treuner-Lange A."/>
            <person name="Velicer G.J."/>
            <person name="Vorholter F.-J."/>
            <person name="Weissman K.J."/>
            <person name="Welch R.D."/>
            <person name="Wenzel S.C."/>
            <person name="Whitworth D.E."/>
            <person name="Wilhelm S."/>
            <person name="Wittmann C."/>
            <person name="Bloecker H."/>
            <person name="Puehler A."/>
            <person name="Mueller R."/>
        </authorList>
    </citation>
    <scope>NUCLEOTIDE SEQUENCE [LARGE SCALE GENOMIC DNA]</scope>
    <source>
        <strain>So ce56</strain>
    </source>
</reference>
<reference key="2">
    <citation type="journal article" date="2009" name="J. Biol. Chem.">
        <title>Genome mining in Sorangium cellulosum So ce56: identification and characterization of the homologous electron transfer proteins of a myxobacterial cytochrome P450.</title>
        <authorList>
            <person name="Ewen K.M."/>
            <person name="Hannemann F."/>
            <person name="Khatri Y."/>
            <person name="Perlova O."/>
            <person name="Kappl R."/>
            <person name="Krug D."/>
            <person name="Huettermann J."/>
            <person name="Mueller R."/>
            <person name="Bernhardt R."/>
        </authorList>
    </citation>
    <scope>FUNCTION</scope>
    <scope>CATALYTIC ACTIVITY</scope>
    <scope>COFACTOR</scope>
    <scope>BIOPHYSICOCHEMICAL PROPERTIES</scope>
    <source>
        <strain>So ce56</strain>
    </source>
</reference>
<keyword id="KW-0274">FAD</keyword>
<keyword id="KW-0285">Flavoprotein</keyword>
<keyword id="KW-0521">NADP</keyword>
<keyword id="KW-0547">Nucleotide-binding</keyword>
<keyword id="KW-0560">Oxidoreductase</keyword>
<keyword id="KW-1185">Reference proteome</keyword>
<protein>
    <recommendedName>
        <fullName evidence="5">Ferredoxin--NADP reductase A</fullName>
        <ecNumber evidence="6">1.18.1.2</ecNumber>
    </recommendedName>
    <alternativeName>
        <fullName evidence="4">Ferredoxin reductase FdR_A</fullName>
    </alternativeName>
</protein>
<gene>
    <name evidence="7" type="ordered locus">sce7188</name>
</gene>
<evidence type="ECO:0000250" key="1">
    <source>
        <dbReference type="UniProtKB" id="P28861"/>
    </source>
</evidence>
<evidence type="ECO:0000255" key="2">
    <source>
        <dbReference type="PROSITE-ProRule" id="PRU00716"/>
    </source>
</evidence>
<evidence type="ECO:0000269" key="3">
    <source>
    </source>
</evidence>
<evidence type="ECO:0000303" key="4">
    <source>
    </source>
</evidence>
<evidence type="ECO:0000305" key="5"/>
<evidence type="ECO:0000305" key="6">
    <source>
    </source>
</evidence>
<evidence type="ECO:0000312" key="7">
    <source>
        <dbReference type="EMBL" id="CAN97356.1"/>
    </source>
</evidence>
<comment type="function">
    <text evidence="3">Transports electrons between NADPH and ferredoxin (PubMed:19696019). Can transfer electrons to ferredoxins Fdx2 and Fdx8 (PubMed:19696019). Prefers NADPH to NADH (PubMed:19696019).</text>
</comment>
<comment type="catalytic activity">
    <reaction evidence="6">
        <text>2 reduced [4Fe-4S]-[ferredoxin] + NADP(+) + H(+) = 2 oxidized [4Fe-4S]-[ferredoxin] + NADPH</text>
        <dbReference type="Rhea" id="RHEA:76995"/>
        <dbReference type="Rhea" id="RHEA-COMP:18797"/>
        <dbReference type="Rhea" id="RHEA-COMP:18798"/>
        <dbReference type="ChEBI" id="CHEBI:15378"/>
        <dbReference type="ChEBI" id="CHEBI:33722"/>
        <dbReference type="ChEBI" id="CHEBI:33723"/>
        <dbReference type="ChEBI" id="CHEBI:57783"/>
        <dbReference type="ChEBI" id="CHEBI:58349"/>
        <dbReference type="EC" id="1.18.1.2"/>
    </reaction>
</comment>
<comment type="cofactor">
    <cofactor evidence="3">
        <name>FAD</name>
        <dbReference type="ChEBI" id="CHEBI:57692"/>
    </cofactor>
</comment>
<comment type="biophysicochemical properties">
    <kinetics>
        <KM evidence="3">474 uM for NADPH</KM>
    </kinetics>
</comment>
<comment type="similarity">
    <text evidence="5">Belongs to the ferredoxin--NADP reductase type 1 family.</text>
</comment>
<proteinExistence type="evidence at protein level"/>